<dbReference type="EMBL" id="CP000439">
    <property type="protein sequence ID" value="ABK89503.1"/>
    <property type="molecule type" value="Genomic_DNA"/>
</dbReference>
<dbReference type="RefSeq" id="WP_003033386.1">
    <property type="nucleotide sequence ID" value="NZ_CP009633.1"/>
</dbReference>
<dbReference type="SMR" id="A0Q5I8"/>
<dbReference type="GeneID" id="75263907"/>
<dbReference type="KEGG" id="ftn:FTN_0608"/>
<dbReference type="KEGG" id="ftx:AW25_1420"/>
<dbReference type="BioCyc" id="FTUL401614:G1G75-633-MONOMER"/>
<dbReference type="Proteomes" id="UP000000762">
    <property type="component" value="Chromosome"/>
</dbReference>
<dbReference type="GO" id="GO:0022627">
    <property type="term" value="C:cytosolic small ribosomal subunit"/>
    <property type="evidence" value="ECO:0007669"/>
    <property type="project" value="TreeGrafter"/>
</dbReference>
<dbReference type="GO" id="GO:0019843">
    <property type="term" value="F:rRNA binding"/>
    <property type="evidence" value="ECO:0007669"/>
    <property type="project" value="UniProtKB-UniRule"/>
</dbReference>
<dbReference type="GO" id="GO:0003735">
    <property type="term" value="F:structural constituent of ribosome"/>
    <property type="evidence" value="ECO:0007669"/>
    <property type="project" value="InterPro"/>
</dbReference>
<dbReference type="GO" id="GO:0006412">
    <property type="term" value="P:translation"/>
    <property type="evidence" value="ECO:0007669"/>
    <property type="project" value="UniProtKB-UniRule"/>
</dbReference>
<dbReference type="CDD" id="cd00353">
    <property type="entry name" value="Ribosomal_S15p_S13e"/>
    <property type="match status" value="1"/>
</dbReference>
<dbReference type="FunFam" id="1.10.287.10:FF:000002">
    <property type="entry name" value="30S ribosomal protein S15"/>
    <property type="match status" value="1"/>
</dbReference>
<dbReference type="Gene3D" id="6.10.250.3130">
    <property type="match status" value="1"/>
</dbReference>
<dbReference type="Gene3D" id="1.10.287.10">
    <property type="entry name" value="S15/NS1, RNA-binding"/>
    <property type="match status" value="1"/>
</dbReference>
<dbReference type="HAMAP" id="MF_01343_B">
    <property type="entry name" value="Ribosomal_uS15_B"/>
    <property type="match status" value="1"/>
</dbReference>
<dbReference type="InterPro" id="IPR000589">
    <property type="entry name" value="Ribosomal_uS15"/>
</dbReference>
<dbReference type="InterPro" id="IPR005290">
    <property type="entry name" value="Ribosomal_uS15_bac-type"/>
</dbReference>
<dbReference type="InterPro" id="IPR009068">
    <property type="entry name" value="uS15_NS1_RNA-bd_sf"/>
</dbReference>
<dbReference type="NCBIfam" id="TIGR00952">
    <property type="entry name" value="S15_bact"/>
    <property type="match status" value="1"/>
</dbReference>
<dbReference type="PANTHER" id="PTHR23321">
    <property type="entry name" value="RIBOSOMAL PROTEIN S15, BACTERIAL AND ORGANELLAR"/>
    <property type="match status" value="1"/>
</dbReference>
<dbReference type="PANTHER" id="PTHR23321:SF26">
    <property type="entry name" value="SMALL RIBOSOMAL SUBUNIT PROTEIN US15M"/>
    <property type="match status" value="1"/>
</dbReference>
<dbReference type="Pfam" id="PF00312">
    <property type="entry name" value="Ribosomal_S15"/>
    <property type="match status" value="1"/>
</dbReference>
<dbReference type="SMART" id="SM01387">
    <property type="entry name" value="Ribosomal_S15"/>
    <property type="match status" value="1"/>
</dbReference>
<dbReference type="SUPFAM" id="SSF47060">
    <property type="entry name" value="S15/NS1 RNA-binding domain"/>
    <property type="match status" value="1"/>
</dbReference>
<dbReference type="PROSITE" id="PS00362">
    <property type="entry name" value="RIBOSOMAL_S15"/>
    <property type="match status" value="1"/>
</dbReference>
<accession>A0Q5I8</accession>
<feature type="chain" id="PRO_1000054785" description="Small ribosomal subunit protein uS15">
    <location>
        <begin position="1"/>
        <end position="88"/>
    </location>
</feature>
<name>RS15_FRATN</name>
<proteinExistence type="inferred from homology"/>
<keyword id="KW-0687">Ribonucleoprotein</keyword>
<keyword id="KW-0689">Ribosomal protein</keyword>
<keyword id="KW-0694">RNA-binding</keyword>
<keyword id="KW-0699">rRNA-binding</keyword>
<protein>
    <recommendedName>
        <fullName evidence="1">Small ribosomal subunit protein uS15</fullName>
    </recommendedName>
    <alternativeName>
        <fullName evidence="2">30S ribosomal protein S15</fullName>
    </alternativeName>
</protein>
<gene>
    <name evidence="1" type="primary">rpsO</name>
    <name type="ordered locus">FTN_0608</name>
</gene>
<organism>
    <name type="scientific">Francisella tularensis subsp. novicida (strain U112)</name>
    <dbReference type="NCBI Taxonomy" id="401614"/>
    <lineage>
        <taxon>Bacteria</taxon>
        <taxon>Pseudomonadati</taxon>
        <taxon>Pseudomonadota</taxon>
        <taxon>Gammaproteobacteria</taxon>
        <taxon>Thiotrichales</taxon>
        <taxon>Francisellaceae</taxon>
        <taxon>Francisella</taxon>
    </lineage>
</organism>
<reference key="1">
    <citation type="journal article" date="2007" name="Genome Biol.">
        <title>Comparison of Francisella tularensis genomes reveals evolutionary events associated with the emergence of human pathogenic strains.</title>
        <authorList>
            <person name="Rohmer L."/>
            <person name="Fong C."/>
            <person name="Abmayr S."/>
            <person name="Wasnick M."/>
            <person name="Larson Freeman T.J."/>
            <person name="Radey M."/>
            <person name="Guina T."/>
            <person name="Svensson K."/>
            <person name="Hayden H.S."/>
            <person name="Jacobs M."/>
            <person name="Gallagher L.A."/>
            <person name="Manoil C."/>
            <person name="Ernst R.K."/>
            <person name="Drees B."/>
            <person name="Buckley D."/>
            <person name="Haugen E."/>
            <person name="Bovee D."/>
            <person name="Zhou Y."/>
            <person name="Chang J."/>
            <person name="Levy R."/>
            <person name="Lim R."/>
            <person name="Gillett W."/>
            <person name="Guenthener D."/>
            <person name="Kang A."/>
            <person name="Shaffer S.A."/>
            <person name="Taylor G."/>
            <person name="Chen J."/>
            <person name="Gallis B."/>
            <person name="D'Argenio D.A."/>
            <person name="Forsman M."/>
            <person name="Olson M.V."/>
            <person name="Goodlett D.R."/>
            <person name="Kaul R."/>
            <person name="Miller S.I."/>
            <person name="Brittnacher M.J."/>
        </authorList>
    </citation>
    <scope>NUCLEOTIDE SEQUENCE [LARGE SCALE GENOMIC DNA]</scope>
    <source>
        <strain>U112</strain>
    </source>
</reference>
<sequence>MLTAQDKQKIIKENQLAEGDTGSPEVQVALLTARINDLQGHFETHKKDNHSRRGLLRLVSQRRKLLDYLHDKDVERYRSLIKKLNIRR</sequence>
<evidence type="ECO:0000255" key="1">
    <source>
        <dbReference type="HAMAP-Rule" id="MF_01343"/>
    </source>
</evidence>
<evidence type="ECO:0000305" key="2"/>
<comment type="function">
    <text evidence="1">One of the primary rRNA binding proteins, it binds directly to 16S rRNA where it helps nucleate assembly of the platform of the 30S subunit by binding and bridging several RNA helices of the 16S rRNA.</text>
</comment>
<comment type="function">
    <text evidence="1">Forms an intersubunit bridge (bridge B4) with the 23S rRNA of the 50S subunit in the ribosome.</text>
</comment>
<comment type="subunit">
    <text evidence="1">Part of the 30S ribosomal subunit. Forms a bridge to the 50S subunit in the 70S ribosome, contacting the 23S rRNA.</text>
</comment>
<comment type="similarity">
    <text evidence="1">Belongs to the universal ribosomal protein uS15 family.</text>
</comment>